<accession>Q3ECT8</accession>
<evidence type="ECO:0000250" key="1"/>
<evidence type="ECO:0000255" key="2"/>
<evidence type="ECO:0000269" key="3">
    <source>
    </source>
</evidence>
<evidence type="ECO:0000305" key="4"/>
<keyword id="KW-1003">Cell membrane</keyword>
<keyword id="KW-0325">Glycoprotein</keyword>
<keyword id="KW-0472">Membrane</keyword>
<keyword id="KW-1185">Reference proteome</keyword>
<keyword id="KW-0812">Transmembrane</keyword>
<keyword id="KW-1133">Transmembrane helix</keyword>
<proteinExistence type="evidence at transcript level"/>
<sequence>MVEVPGSVGTTASLSLRLGQMVLAFGSLLFMTIGVRFYQFTAFCYLVTIMSLAIPWNLTLAMVDIYCVILQQPFQKPRILLAISIGDWVVSVLALASASSAASVVDILRSNESSCPPTICNRYQFAATLAFLTWFLSLSSSLFNLWLLPSLI</sequence>
<name>CSPL4_ARATH</name>
<gene>
    <name type="ordered locus">At1g49405</name>
    <name type="ORF">F13F21.34</name>
</gene>
<organism>
    <name type="scientific">Arabidopsis thaliana</name>
    <name type="common">Mouse-ear cress</name>
    <dbReference type="NCBI Taxonomy" id="3702"/>
    <lineage>
        <taxon>Eukaryota</taxon>
        <taxon>Viridiplantae</taxon>
        <taxon>Streptophyta</taxon>
        <taxon>Embryophyta</taxon>
        <taxon>Tracheophyta</taxon>
        <taxon>Spermatophyta</taxon>
        <taxon>Magnoliopsida</taxon>
        <taxon>eudicotyledons</taxon>
        <taxon>Gunneridae</taxon>
        <taxon>Pentapetalae</taxon>
        <taxon>rosids</taxon>
        <taxon>malvids</taxon>
        <taxon>Brassicales</taxon>
        <taxon>Brassicaceae</taxon>
        <taxon>Camelineae</taxon>
        <taxon>Arabidopsis</taxon>
    </lineage>
</organism>
<protein>
    <recommendedName>
        <fullName>CASP-like protein 5C3</fullName>
        <shortName>AtCASPL5C3</shortName>
    </recommendedName>
</protein>
<dbReference type="EMBL" id="AC007504">
    <property type="status" value="NOT_ANNOTATED_CDS"/>
    <property type="molecule type" value="Genomic_DNA"/>
</dbReference>
<dbReference type="EMBL" id="CP002684">
    <property type="protein sequence ID" value="AEE32426.1"/>
    <property type="molecule type" value="Genomic_DNA"/>
</dbReference>
<dbReference type="RefSeq" id="NP_683414.1">
    <property type="nucleotide sequence ID" value="NM_148573.2"/>
</dbReference>
<dbReference type="FunCoup" id="Q3ECT8">
    <property type="interactions" value="13"/>
</dbReference>
<dbReference type="STRING" id="3702.Q3ECT8"/>
<dbReference type="GlyGen" id="Q3ECT8">
    <property type="glycosylation" value="1 site"/>
</dbReference>
<dbReference type="PaxDb" id="3702-AT1G49405.1"/>
<dbReference type="EnsemblPlants" id="AT1G49405.1">
    <property type="protein sequence ID" value="AT1G49405.1"/>
    <property type="gene ID" value="AT1G49405"/>
</dbReference>
<dbReference type="GeneID" id="841364"/>
<dbReference type="Gramene" id="AT1G49405.1">
    <property type="protein sequence ID" value="AT1G49405.1"/>
    <property type="gene ID" value="AT1G49405"/>
</dbReference>
<dbReference type="KEGG" id="ath:AT1G49405"/>
<dbReference type="Araport" id="AT1G49405"/>
<dbReference type="TAIR" id="AT1G49405">
    <property type="gene designation" value="CASPL5C3"/>
</dbReference>
<dbReference type="eggNOG" id="ENOG502RYBF">
    <property type="taxonomic scope" value="Eukaryota"/>
</dbReference>
<dbReference type="HOGENOM" id="CLU_103961_1_0_1"/>
<dbReference type="InParanoid" id="Q3ECT8"/>
<dbReference type="OMA" id="ECNESHA"/>
<dbReference type="PhylomeDB" id="Q3ECT8"/>
<dbReference type="PRO" id="PR:Q3ECT8"/>
<dbReference type="Proteomes" id="UP000006548">
    <property type="component" value="Chromosome 1"/>
</dbReference>
<dbReference type="ExpressionAtlas" id="Q3ECT8">
    <property type="expression patterns" value="baseline and differential"/>
</dbReference>
<dbReference type="GO" id="GO:0005886">
    <property type="term" value="C:plasma membrane"/>
    <property type="evidence" value="ECO:0007669"/>
    <property type="project" value="UniProtKB-SubCell"/>
</dbReference>
<dbReference type="InterPro" id="IPR006702">
    <property type="entry name" value="CASP_dom"/>
</dbReference>
<dbReference type="InterPro" id="IPR045009">
    <property type="entry name" value="CASPL-5"/>
</dbReference>
<dbReference type="PANTHER" id="PTHR32021">
    <property type="entry name" value="CASP-LIKE PROTEIN 5B3"/>
    <property type="match status" value="1"/>
</dbReference>
<dbReference type="PANTHER" id="PTHR32021:SF32">
    <property type="entry name" value="CASP-LIKE PROTEIN 5C3"/>
    <property type="match status" value="1"/>
</dbReference>
<dbReference type="Pfam" id="PF04535">
    <property type="entry name" value="CASP_dom"/>
    <property type="match status" value="1"/>
</dbReference>
<reference key="1">
    <citation type="journal article" date="2000" name="Nature">
        <title>Sequence and analysis of chromosome 1 of the plant Arabidopsis thaliana.</title>
        <authorList>
            <person name="Theologis A."/>
            <person name="Ecker J.R."/>
            <person name="Palm C.J."/>
            <person name="Federspiel N.A."/>
            <person name="Kaul S."/>
            <person name="White O."/>
            <person name="Alonso J."/>
            <person name="Altafi H."/>
            <person name="Araujo R."/>
            <person name="Bowman C.L."/>
            <person name="Brooks S.Y."/>
            <person name="Buehler E."/>
            <person name="Chan A."/>
            <person name="Chao Q."/>
            <person name="Chen H."/>
            <person name="Cheuk R.F."/>
            <person name="Chin C.W."/>
            <person name="Chung M.K."/>
            <person name="Conn L."/>
            <person name="Conway A.B."/>
            <person name="Conway A.R."/>
            <person name="Creasy T.H."/>
            <person name="Dewar K."/>
            <person name="Dunn P."/>
            <person name="Etgu P."/>
            <person name="Feldblyum T.V."/>
            <person name="Feng J.-D."/>
            <person name="Fong B."/>
            <person name="Fujii C.Y."/>
            <person name="Gill J.E."/>
            <person name="Goldsmith A.D."/>
            <person name="Haas B."/>
            <person name="Hansen N.F."/>
            <person name="Hughes B."/>
            <person name="Huizar L."/>
            <person name="Hunter J.L."/>
            <person name="Jenkins J."/>
            <person name="Johnson-Hopson C."/>
            <person name="Khan S."/>
            <person name="Khaykin E."/>
            <person name="Kim C.J."/>
            <person name="Koo H.L."/>
            <person name="Kremenetskaia I."/>
            <person name="Kurtz D.B."/>
            <person name="Kwan A."/>
            <person name="Lam B."/>
            <person name="Langin-Hooper S."/>
            <person name="Lee A."/>
            <person name="Lee J.M."/>
            <person name="Lenz C.A."/>
            <person name="Li J.H."/>
            <person name="Li Y.-P."/>
            <person name="Lin X."/>
            <person name="Liu S.X."/>
            <person name="Liu Z.A."/>
            <person name="Luros J.S."/>
            <person name="Maiti R."/>
            <person name="Marziali A."/>
            <person name="Militscher J."/>
            <person name="Miranda M."/>
            <person name="Nguyen M."/>
            <person name="Nierman W.C."/>
            <person name="Osborne B.I."/>
            <person name="Pai G."/>
            <person name="Peterson J."/>
            <person name="Pham P.K."/>
            <person name="Rizzo M."/>
            <person name="Rooney T."/>
            <person name="Rowley D."/>
            <person name="Sakano H."/>
            <person name="Salzberg S.L."/>
            <person name="Schwartz J.R."/>
            <person name="Shinn P."/>
            <person name="Southwick A.M."/>
            <person name="Sun H."/>
            <person name="Tallon L.J."/>
            <person name="Tambunga G."/>
            <person name="Toriumi M.J."/>
            <person name="Town C.D."/>
            <person name="Utterback T."/>
            <person name="Van Aken S."/>
            <person name="Vaysberg M."/>
            <person name="Vysotskaia V.S."/>
            <person name="Walker M."/>
            <person name="Wu D."/>
            <person name="Yu G."/>
            <person name="Fraser C.M."/>
            <person name="Venter J.C."/>
            <person name="Davis R.W."/>
        </authorList>
    </citation>
    <scope>NUCLEOTIDE SEQUENCE [LARGE SCALE GENOMIC DNA]</scope>
    <source>
        <strain>cv. Columbia</strain>
    </source>
</reference>
<reference key="2">
    <citation type="journal article" date="2017" name="Plant J.">
        <title>Araport11: a complete reannotation of the Arabidopsis thaliana reference genome.</title>
        <authorList>
            <person name="Cheng C.Y."/>
            <person name="Krishnakumar V."/>
            <person name="Chan A.P."/>
            <person name="Thibaud-Nissen F."/>
            <person name="Schobel S."/>
            <person name="Town C.D."/>
        </authorList>
    </citation>
    <scope>GENOME REANNOTATION</scope>
    <source>
        <strain>cv. Columbia</strain>
    </source>
</reference>
<reference key="3">
    <citation type="journal article" date="2014" name="Plant Physiol.">
        <title>Functional and evolutionary analysis of the CASPARIAN STRIP MEMBRANE DOMAIN PROTEIN family.</title>
        <authorList>
            <person name="Roppolo D."/>
            <person name="Boeckmann B."/>
            <person name="Pfister A."/>
            <person name="Boutet E."/>
            <person name="Rubio M.C."/>
            <person name="Denervaud-Tendon V."/>
            <person name="Vermeer J.E."/>
            <person name="Gheyselinck J."/>
            <person name="Xenarios I."/>
            <person name="Geldner N."/>
        </authorList>
    </citation>
    <scope>TISSUE SPECIFICITY</scope>
    <scope>DEVELOPMENTAL STAGE</scope>
    <scope>GENE FAMILY</scope>
    <scope>NOMENCLATURE</scope>
</reference>
<feature type="chain" id="PRO_0000308654" description="CASP-like protein 5C3">
    <location>
        <begin position="1"/>
        <end position="152"/>
    </location>
</feature>
<feature type="topological domain" description="Cytoplasmic" evidence="2">
    <location>
        <begin position="1"/>
        <end position="17"/>
    </location>
</feature>
<feature type="transmembrane region" description="Helical" evidence="2">
    <location>
        <begin position="18"/>
        <end position="38"/>
    </location>
</feature>
<feature type="topological domain" description="Extracellular" evidence="2">
    <location>
        <begin position="39"/>
        <end position="42"/>
    </location>
</feature>
<feature type="transmembrane region" description="Helical" evidence="2">
    <location>
        <begin position="43"/>
        <end position="63"/>
    </location>
</feature>
<feature type="topological domain" description="Cytoplasmic" evidence="2">
    <location>
        <begin position="64"/>
        <end position="78"/>
    </location>
</feature>
<feature type="transmembrane region" description="Helical" evidence="2">
    <location>
        <begin position="79"/>
        <end position="99"/>
    </location>
</feature>
<feature type="topological domain" description="Extracellular" evidence="2">
    <location>
        <begin position="100"/>
        <end position="128"/>
    </location>
</feature>
<feature type="transmembrane region" description="Helical" evidence="2">
    <location>
        <begin position="129"/>
        <end position="149"/>
    </location>
</feature>
<feature type="topological domain" description="Cytoplasmic" evidence="2">
    <location>
        <begin position="150"/>
        <end position="152"/>
    </location>
</feature>
<feature type="glycosylation site" description="N-linked (GlcNAc...) asparagine" evidence="2">
    <location>
        <position position="111"/>
    </location>
</feature>
<comment type="subunit">
    <text evidence="1">Homodimer and heterodimers.</text>
</comment>
<comment type="subcellular location">
    <subcellularLocation>
        <location evidence="1">Cell membrane</location>
        <topology evidence="1">Multi-pass membrane protein</topology>
    </subcellularLocation>
</comment>
<comment type="tissue specificity">
    <text evidence="3">Expressed in the floral organ abscission zone and flower buds.</text>
</comment>
<comment type="developmental stage">
    <text evidence="3">In floral buds, early expressed before the activation of the abscission zone and the expression of most of the genes known to be involved in floral organ shedding.</text>
</comment>
<comment type="similarity">
    <text evidence="4">Belongs to the Casparian strip membrane proteins (CASP) family.</text>
</comment>